<reference key="1">
    <citation type="journal article" date="2007" name="ISME J.">
        <title>Population level functional diversity in a microbial community revealed by comparative genomic and metagenomic analyses.</title>
        <authorList>
            <person name="Bhaya D."/>
            <person name="Grossman A.R."/>
            <person name="Steunou A.-S."/>
            <person name="Khuri N."/>
            <person name="Cohan F.M."/>
            <person name="Hamamura N."/>
            <person name="Melendrez M.C."/>
            <person name="Bateson M.M."/>
            <person name="Ward D.M."/>
            <person name="Heidelberg J.F."/>
        </authorList>
    </citation>
    <scope>NUCLEOTIDE SEQUENCE [LARGE SCALE GENOMIC DNA]</scope>
    <source>
        <strain>JA-2-3B'a(2-13)</strain>
    </source>
</reference>
<protein>
    <recommendedName>
        <fullName evidence="1">Endoribonuclease YbeY</fullName>
        <ecNumber evidence="1">3.1.-.-</ecNumber>
    </recommendedName>
</protein>
<accession>Q2JKD4</accession>
<gene>
    <name evidence="1" type="primary">ybeY</name>
    <name type="ordered locus">CYB_1900</name>
</gene>
<sequence length="163" mass="18588">MDGFLDLYLQFNIPSPIEEATWRHWFEIWLKELGVQEPCELSLCLTSDEHIRQLNREFRHLDEPTDVLAFAAQEMLAPFGIQDITGVRLLGDIVISVPTARAQAKAQGHRLSQELAWLASHGLLHLLGWDHPDELSLQRMLQQQRQLLAAIQLDGEVAHGQQP</sequence>
<evidence type="ECO:0000255" key="1">
    <source>
        <dbReference type="HAMAP-Rule" id="MF_00009"/>
    </source>
</evidence>
<comment type="function">
    <text evidence="1">Single strand-specific metallo-endoribonuclease involved in late-stage 70S ribosome quality control and in maturation of the 3' terminus of the 16S rRNA.</text>
</comment>
<comment type="cofactor">
    <cofactor evidence="1">
        <name>Zn(2+)</name>
        <dbReference type="ChEBI" id="CHEBI:29105"/>
    </cofactor>
    <text evidence="1">Binds 1 zinc ion.</text>
</comment>
<comment type="subcellular location">
    <subcellularLocation>
        <location evidence="1">Cytoplasm</location>
    </subcellularLocation>
</comment>
<comment type="similarity">
    <text evidence="1">Belongs to the endoribonuclease YbeY family.</text>
</comment>
<feature type="chain" id="PRO_0000284335" description="Endoribonuclease YbeY">
    <location>
        <begin position="1"/>
        <end position="163"/>
    </location>
</feature>
<feature type="binding site" evidence="1">
    <location>
        <position position="121"/>
    </location>
    <ligand>
        <name>Zn(2+)</name>
        <dbReference type="ChEBI" id="CHEBI:29105"/>
        <note>catalytic</note>
    </ligand>
</feature>
<feature type="binding site" evidence="1">
    <location>
        <position position="125"/>
    </location>
    <ligand>
        <name>Zn(2+)</name>
        <dbReference type="ChEBI" id="CHEBI:29105"/>
        <note>catalytic</note>
    </ligand>
</feature>
<feature type="binding site" evidence="1">
    <location>
        <position position="131"/>
    </location>
    <ligand>
        <name>Zn(2+)</name>
        <dbReference type="ChEBI" id="CHEBI:29105"/>
        <note>catalytic</note>
    </ligand>
</feature>
<organism>
    <name type="scientific">Synechococcus sp. (strain JA-2-3B'a(2-13))</name>
    <name type="common">Cyanobacteria bacterium Yellowstone B-Prime</name>
    <dbReference type="NCBI Taxonomy" id="321332"/>
    <lineage>
        <taxon>Bacteria</taxon>
        <taxon>Bacillati</taxon>
        <taxon>Cyanobacteriota</taxon>
        <taxon>Cyanophyceae</taxon>
        <taxon>Synechococcales</taxon>
        <taxon>Synechococcaceae</taxon>
        <taxon>Synechococcus</taxon>
    </lineage>
</organism>
<dbReference type="EC" id="3.1.-.-" evidence="1"/>
<dbReference type="EMBL" id="CP000240">
    <property type="protein sequence ID" value="ABD02855.1"/>
    <property type="molecule type" value="Genomic_DNA"/>
</dbReference>
<dbReference type="SMR" id="Q2JKD4"/>
<dbReference type="STRING" id="321332.CYB_1900"/>
<dbReference type="KEGG" id="cyb:CYB_1900"/>
<dbReference type="eggNOG" id="COG0319">
    <property type="taxonomic scope" value="Bacteria"/>
</dbReference>
<dbReference type="HOGENOM" id="CLU_106710_3_0_3"/>
<dbReference type="OrthoDB" id="9807740at2"/>
<dbReference type="Proteomes" id="UP000001938">
    <property type="component" value="Chromosome"/>
</dbReference>
<dbReference type="GO" id="GO:0005737">
    <property type="term" value="C:cytoplasm"/>
    <property type="evidence" value="ECO:0007669"/>
    <property type="project" value="UniProtKB-SubCell"/>
</dbReference>
<dbReference type="GO" id="GO:0004222">
    <property type="term" value="F:metalloendopeptidase activity"/>
    <property type="evidence" value="ECO:0007669"/>
    <property type="project" value="InterPro"/>
</dbReference>
<dbReference type="GO" id="GO:0004521">
    <property type="term" value="F:RNA endonuclease activity"/>
    <property type="evidence" value="ECO:0007669"/>
    <property type="project" value="UniProtKB-UniRule"/>
</dbReference>
<dbReference type="GO" id="GO:0008270">
    <property type="term" value="F:zinc ion binding"/>
    <property type="evidence" value="ECO:0007669"/>
    <property type="project" value="UniProtKB-UniRule"/>
</dbReference>
<dbReference type="GO" id="GO:0006364">
    <property type="term" value="P:rRNA processing"/>
    <property type="evidence" value="ECO:0007669"/>
    <property type="project" value="UniProtKB-UniRule"/>
</dbReference>
<dbReference type="Gene3D" id="3.40.390.30">
    <property type="entry name" value="Metalloproteases ('zincins'), catalytic domain"/>
    <property type="match status" value="1"/>
</dbReference>
<dbReference type="HAMAP" id="MF_00009">
    <property type="entry name" value="Endoribonucl_YbeY"/>
    <property type="match status" value="1"/>
</dbReference>
<dbReference type="InterPro" id="IPR023091">
    <property type="entry name" value="MetalPrtase_cat_dom_sf_prd"/>
</dbReference>
<dbReference type="InterPro" id="IPR002036">
    <property type="entry name" value="YbeY"/>
</dbReference>
<dbReference type="InterPro" id="IPR020549">
    <property type="entry name" value="YbeY_CS"/>
</dbReference>
<dbReference type="NCBIfam" id="TIGR00043">
    <property type="entry name" value="rRNA maturation RNase YbeY"/>
    <property type="match status" value="1"/>
</dbReference>
<dbReference type="PANTHER" id="PTHR46986">
    <property type="entry name" value="ENDORIBONUCLEASE YBEY, CHLOROPLASTIC"/>
    <property type="match status" value="1"/>
</dbReference>
<dbReference type="PANTHER" id="PTHR46986:SF1">
    <property type="entry name" value="ENDORIBONUCLEASE YBEY, CHLOROPLASTIC"/>
    <property type="match status" value="1"/>
</dbReference>
<dbReference type="Pfam" id="PF02130">
    <property type="entry name" value="YbeY"/>
    <property type="match status" value="1"/>
</dbReference>
<dbReference type="SUPFAM" id="SSF55486">
    <property type="entry name" value="Metalloproteases ('zincins'), catalytic domain"/>
    <property type="match status" value="1"/>
</dbReference>
<dbReference type="PROSITE" id="PS01306">
    <property type="entry name" value="UPF0054"/>
    <property type="match status" value="1"/>
</dbReference>
<keyword id="KW-0963">Cytoplasm</keyword>
<keyword id="KW-0255">Endonuclease</keyword>
<keyword id="KW-0378">Hydrolase</keyword>
<keyword id="KW-0479">Metal-binding</keyword>
<keyword id="KW-0540">Nuclease</keyword>
<keyword id="KW-1185">Reference proteome</keyword>
<keyword id="KW-0690">Ribosome biogenesis</keyword>
<keyword id="KW-0698">rRNA processing</keyword>
<keyword id="KW-0862">Zinc</keyword>
<name>YBEY_SYNJB</name>
<proteinExistence type="inferred from homology"/>